<accession>Q6LZC7</accession>
<evidence type="ECO:0000250" key="1"/>
<evidence type="ECO:0000255" key="2">
    <source>
        <dbReference type="PROSITE-ProRule" id="PRU00409"/>
    </source>
</evidence>
<evidence type="ECO:0000305" key="3"/>
<sequence length="292" mass="33016">MRMGIISEERDWVTDELKSKMEKNDIDPVIIQPSKIISYIESEVKFEQNNRSILDLKCAFVRNIGEGVEMFHRFDMLKYLENYVPIINPMDGIENAGNKFRTSFLMEVHKIPHPKTIVAEDVNKALIAADKFEDVVLKPLFGNQGKGLVRVKGRSTVAKLKALNTFKSTHGVIYMQEFVNNPNNVYRDIRAFVVGDKVISAMYRTSDNWITNIHQNGVPEKCEITEELSKIVLAAKDAVGLVYAGVDILESSDGLKVIEVNACPSWEGLSRISEVDIAQNLIDEALNYAKEY</sequence>
<protein>
    <recommendedName>
        <fullName>Tetrahydromethanopterin:alpha-L-glutamate ligase</fullName>
        <ecNumber>6.3.2.33</ecNumber>
    </recommendedName>
    <alternativeName>
        <fullName>H(4)MPT:alpha-L-glutamate ligase</fullName>
    </alternativeName>
</protein>
<keyword id="KW-0067">ATP-binding</keyword>
<keyword id="KW-0342">GTP-binding</keyword>
<keyword id="KW-0436">Ligase</keyword>
<keyword id="KW-0460">Magnesium</keyword>
<keyword id="KW-0464">Manganese</keyword>
<keyword id="KW-0479">Metal-binding</keyword>
<keyword id="KW-0547">Nucleotide-binding</keyword>
<keyword id="KW-1185">Reference proteome</keyword>
<proteinExistence type="inferred from homology"/>
<name>MPTN_METMP</name>
<feature type="chain" id="PRO_0000205503" description="Tetrahydromethanopterin:alpha-L-glutamate ligase">
    <location>
        <begin position="1"/>
        <end position="292"/>
    </location>
</feature>
<feature type="domain" description="ATP-grasp" evidence="2">
    <location>
        <begin position="103"/>
        <end position="286"/>
    </location>
</feature>
<feature type="binding site" evidence="1">
    <location>
        <position position="138"/>
    </location>
    <ligand>
        <name>ATP</name>
        <dbReference type="ChEBI" id="CHEBI:30616"/>
    </ligand>
</feature>
<feature type="binding site" evidence="2">
    <location>
        <begin position="176"/>
        <end position="188"/>
    </location>
    <ligand>
        <name>ATP</name>
        <dbReference type="ChEBI" id="CHEBI:30616"/>
    </ligand>
</feature>
<feature type="binding site" evidence="1">
    <location>
        <position position="204"/>
    </location>
    <ligand>
        <name>ATP</name>
        <dbReference type="ChEBI" id="CHEBI:30616"/>
    </ligand>
</feature>
<feature type="binding site" evidence="2">
    <location>
        <position position="247"/>
    </location>
    <ligand>
        <name>Mg(2+)</name>
        <dbReference type="ChEBI" id="CHEBI:18420"/>
        <label>1</label>
    </ligand>
</feature>
<feature type="binding site" evidence="2">
    <location>
        <position position="247"/>
    </location>
    <ligand>
        <name>Mn(2+)</name>
        <dbReference type="ChEBI" id="CHEBI:29035"/>
        <label>1</label>
    </ligand>
</feature>
<feature type="binding site" evidence="2">
    <location>
        <position position="259"/>
    </location>
    <ligand>
        <name>Mg(2+)</name>
        <dbReference type="ChEBI" id="CHEBI:18420"/>
        <label>1</label>
    </ligand>
</feature>
<feature type="binding site" evidence="2">
    <location>
        <position position="259"/>
    </location>
    <ligand>
        <name>Mg(2+)</name>
        <dbReference type="ChEBI" id="CHEBI:18420"/>
        <label>2</label>
    </ligand>
</feature>
<feature type="binding site" evidence="2">
    <location>
        <position position="259"/>
    </location>
    <ligand>
        <name>Mn(2+)</name>
        <dbReference type="ChEBI" id="CHEBI:29035"/>
        <label>1</label>
    </ligand>
</feature>
<feature type="binding site" evidence="2">
    <location>
        <position position="259"/>
    </location>
    <ligand>
        <name>Mn(2+)</name>
        <dbReference type="ChEBI" id="CHEBI:29035"/>
        <label>2</label>
    </ligand>
</feature>
<feature type="binding site" evidence="2">
    <location>
        <position position="261"/>
    </location>
    <ligand>
        <name>Mg(2+)</name>
        <dbReference type="ChEBI" id="CHEBI:18420"/>
        <label>2</label>
    </ligand>
</feature>
<feature type="binding site" evidence="2">
    <location>
        <position position="261"/>
    </location>
    <ligand>
        <name>Mn(2+)</name>
        <dbReference type="ChEBI" id="CHEBI:29035"/>
        <label>2</label>
    </ligand>
</feature>
<dbReference type="EC" id="6.3.2.33"/>
<dbReference type="EMBL" id="BX950229">
    <property type="protein sequence ID" value="CAF30258.1"/>
    <property type="molecule type" value="Genomic_DNA"/>
</dbReference>
<dbReference type="RefSeq" id="WP_011170646.1">
    <property type="nucleotide sequence ID" value="NC_005791.1"/>
</dbReference>
<dbReference type="SMR" id="Q6LZC7"/>
<dbReference type="STRING" id="267377.MMP0702"/>
<dbReference type="EnsemblBacteria" id="CAF30258">
    <property type="protein sequence ID" value="CAF30258"/>
    <property type="gene ID" value="MMP0702"/>
</dbReference>
<dbReference type="GeneID" id="2762372"/>
<dbReference type="KEGG" id="mmp:MMP0702"/>
<dbReference type="PATRIC" id="fig|267377.15.peg.719"/>
<dbReference type="eggNOG" id="arCOG01589">
    <property type="taxonomic scope" value="Archaea"/>
</dbReference>
<dbReference type="HOGENOM" id="CLU_054353_2_0_2"/>
<dbReference type="OrthoDB" id="33241at2157"/>
<dbReference type="UniPathway" id="UPA00069"/>
<dbReference type="Proteomes" id="UP000000590">
    <property type="component" value="Chromosome"/>
</dbReference>
<dbReference type="GO" id="GO:0005737">
    <property type="term" value="C:cytoplasm"/>
    <property type="evidence" value="ECO:0007669"/>
    <property type="project" value="TreeGrafter"/>
</dbReference>
<dbReference type="GO" id="GO:0005524">
    <property type="term" value="F:ATP binding"/>
    <property type="evidence" value="ECO:0007669"/>
    <property type="project" value="UniProtKB-KW"/>
</dbReference>
<dbReference type="GO" id="GO:0005525">
    <property type="term" value="F:GTP binding"/>
    <property type="evidence" value="ECO:0007669"/>
    <property type="project" value="UniProtKB-KW"/>
</dbReference>
<dbReference type="GO" id="GO:0016879">
    <property type="term" value="F:ligase activity, forming carbon-nitrogen bonds"/>
    <property type="evidence" value="ECO:0007669"/>
    <property type="project" value="TreeGrafter"/>
</dbReference>
<dbReference type="GO" id="GO:0046872">
    <property type="term" value="F:metal ion binding"/>
    <property type="evidence" value="ECO:0007669"/>
    <property type="project" value="UniProtKB-KW"/>
</dbReference>
<dbReference type="GO" id="GO:0036211">
    <property type="term" value="P:protein modification process"/>
    <property type="evidence" value="ECO:0007669"/>
    <property type="project" value="InterPro"/>
</dbReference>
<dbReference type="Gene3D" id="3.40.50.20">
    <property type="match status" value="1"/>
</dbReference>
<dbReference type="Gene3D" id="3.30.1490.20">
    <property type="entry name" value="ATP-grasp fold, A domain"/>
    <property type="match status" value="1"/>
</dbReference>
<dbReference type="Gene3D" id="3.30.470.20">
    <property type="entry name" value="ATP-grasp fold, B domain"/>
    <property type="match status" value="1"/>
</dbReference>
<dbReference type="InterPro" id="IPR011761">
    <property type="entry name" value="ATP-grasp"/>
</dbReference>
<dbReference type="InterPro" id="IPR013651">
    <property type="entry name" value="ATP-grasp_RimK-type"/>
</dbReference>
<dbReference type="InterPro" id="IPR013815">
    <property type="entry name" value="ATP_grasp_subdomain_1"/>
</dbReference>
<dbReference type="InterPro" id="IPR004666">
    <property type="entry name" value="Rp_bS6_RimK/Lys_biosynth_LsyX"/>
</dbReference>
<dbReference type="InterPro" id="IPR053432">
    <property type="entry name" value="THMPT_Glu_ligase"/>
</dbReference>
<dbReference type="NCBIfam" id="NF040720">
    <property type="entry name" value="MptN_Meth"/>
    <property type="match status" value="1"/>
</dbReference>
<dbReference type="NCBIfam" id="TIGR00768">
    <property type="entry name" value="rimK_fam"/>
    <property type="match status" value="1"/>
</dbReference>
<dbReference type="PANTHER" id="PTHR21621:SF0">
    <property type="entry name" value="BETA-CITRYLGLUTAMATE SYNTHASE B-RELATED"/>
    <property type="match status" value="1"/>
</dbReference>
<dbReference type="PANTHER" id="PTHR21621">
    <property type="entry name" value="RIBOSOMAL PROTEIN S6 MODIFICATION PROTEIN"/>
    <property type="match status" value="1"/>
</dbReference>
<dbReference type="Pfam" id="PF08443">
    <property type="entry name" value="RimK"/>
    <property type="match status" value="1"/>
</dbReference>
<dbReference type="SUPFAM" id="SSF56059">
    <property type="entry name" value="Glutathione synthetase ATP-binding domain-like"/>
    <property type="match status" value="1"/>
</dbReference>
<dbReference type="PROSITE" id="PS50975">
    <property type="entry name" value="ATP_GRASP"/>
    <property type="match status" value="1"/>
</dbReference>
<organism>
    <name type="scientific">Methanococcus maripaludis (strain DSM 14266 / JCM 13030 / NBRC 101832 / S2 / LL)</name>
    <dbReference type="NCBI Taxonomy" id="267377"/>
    <lineage>
        <taxon>Archaea</taxon>
        <taxon>Methanobacteriati</taxon>
        <taxon>Methanobacteriota</taxon>
        <taxon>Methanomada group</taxon>
        <taxon>Methanococci</taxon>
        <taxon>Methanococcales</taxon>
        <taxon>Methanococcaceae</taxon>
        <taxon>Methanococcus</taxon>
    </lineage>
</organism>
<gene>
    <name type="primary">mptN</name>
    <name type="ordered locus">MMP0702</name>
</gene>
<comment type="function">
    <text evidence="1">Catalyzes the ATP or GTP-dependent addition of one L-glutamate molecule to tetrahydromethanopterin, producing tetrahydrosarcinapterin.</text>
</comment>
<comment type="catalytic activity">
    <reaction>
        <text>5,6,7,8-tetrahydromethanopterin + L-glutamate + ATP = 5,6,7,8-tetrahydrosarcinapterin + ADP + phosphate + H(+)</text>
        <dbReference type="Rhea" id="RHEA:30567"/>
        <dbReference type="ChEBI" id="CHEBI:15378"/>
        <dbReference type="ChEBI" id="CHEBI:29985"/>
        <dbReference type="ChEBI" id="CHEBI:30616"/>
        <dbReference type="ChEBI" id="CHEBI:43474"/>
        <dbReference type="ChEBI" id="CHEBI:58103"/>
        <dbReference type="ChEBI" id="CHEBI:59924"/>
        <dbReference type="ChEBI" id="CHEBI:456216"/>
        <dbReference type="EC" id="6.3.2.33"/>
    </reaction>
</comment>
<comment type="cofactor">
    <cofactor evidence="1">
        <name>Mg(2+)</name>
        <dbReference type="ChEBI" id="CHEBI:18420"/>
    </cofactor>
    <cofactor evidence="1">
        <name>Mn(2+)</name>
        <dbReference type="ChEBI" id="CHEBI:29035"/>
    </cofactor>
    <text evidence="1">Binds 2 magnesium or manganese ions per subunit.</text>
</comment>
<comment type="pathway">
    <text>Cofactor biosynthesis; 5,6,7,8-tetrahydrosarcinapterin biosynthesis.</text>
</comment>
<comment type="subunit">
    <text evidence="1">Homodimer.</text>
</comment>
<comment type="similarity">
    <text evidence="3">Belongs to the RimK family. MptN subfamily.</text>
</comment>
<reference key="1">
    <citation type="journal article" date="2004" name="J. Bacteriol.">
        <title>Complete genome sequence of the genetically tractable hydrogenotrophic methanogen Methanococcus maripaludis.</title>
        <authorList>
            <person name="Hendrickson E.L."/>
            <person name="Kaul R."/>
            <person name="Zhou Y."/>
            <person name="Bovee D."/>
            <person name="Chapman P."/>
            <person name="Chung J."/>
            <person name="Conway de Macario E."/>
            <person name="Dodsworth J.A."/>
            <person name="Gillett W."/>
            <person name="Graham D.E."/>
            <person name="Hackett M."/>
            <person name="Haydock A.K."/>
            <person name="Kang A."/>
            <person name="Land M.L."/>
            <person name="Levy R."/>
            <person name="Lie T.J."/>
            <person name="Major T.A."/>
            <person name="Moore B.C."/>
            <person name="Porat I."/>
            <person name="Palmeiri A."/>
            <person name="Rouse G."/>
            <person name="Saenphimmachak C."/>
            <person name="Soell D."/>
            <person name="Van Dien S."/>
            <person name="Wang T."/>
            <person name="Whitman W.B."/>
            <person name="Xia Q."/>
            <person name="Zhang Y."/>
            <person name="Larimer F.W."/>
            <person name="Olson M.V."/>
            <person name="Leigh J.A."/>
        </authorList>
    </citation>
    <scope>NUCLEOTIDE SEQUENCE [LARGE SCALE GENOMIC DNA]</scope>
    <source>
        <strain>DSM 14266 / JCM 13030 / NBRC 101832 / S2 / LL</strain>
    </source>
</reference>